<accession>Q680Q4</accession>
<accession>B9DG12</accession>
<accession>Q56YS2</accession>
<accession>Q56ZS1</accession>
<accession>Q67ZL3</accession>
<accession>Q9FKK4</accession>
<organism>
    <name type="scientific">Arabidopsis thaliana</name>
    <name type="common">Mouse-ear cress</name>
    <dbReference type="NCBI Taxonomy" id="3702"/>
    <lineage>
        <taxon>Eukaryota</taxon>
        <taxon>Viridiplantae</taxon>
        <taxon>Streptophyta</taxon>
        <taxon>Embryophyta</taxon>
        <taxon>Tracheophyta</taxon>
        <taxon>Spermatophyta</taxon>
        <taxon>Magnoliopsida</taxon>
        <taxon>eudicotyledons</taxon>
        <taxon>Gunneridae</taxon>
        <taxon>Pentapetalae</taxon>
        <taxon>rosids</taxon>
        <taxon>malvids</taxon>
        <taxon>Brassicales</taxon>
        <taxon>Brassicaceae</taxon>
        <taxon>Camelineae</taxon>
        <taxon>Arabidopsis</taxon>
    </lineage>
</organism>
<dbReference type="EC" id="2.3.2.-" evidence="19"/>
<dbReference type="EMBL" id="AY700572">
    <property type="protein sequence ID" value="AAU00414.1"/>
    <property type="molecule type" value="mRNA"/>
</dbReference>
<dbReference type="EMBL" id="AB011483">
    <property type="protein sequence ID" value="BAB08225.1"/>
    <property type="molecule type" value="Genomic_DNA"/>
</dbReference>
<dbReference type="EMBL" id="CP002688">
    <property type="protein sequence ID" value="AED97324.1"/>
    <property type="molecule type" value="Genomic_DNA"/>
</dbReference>
<dbReference type="EMBL" id="CP002688">
    <property type="protein sequence ID" value="AED97325.1"/>
    <property type="molecule type" value="Genomic_DNA"/>
</dbReference>
<dbReference type="EMBL" id="CP002688">
    <property type="protein sequence ID" value="AED97326.1"/>
    <property type="molecule type" value="Genomic_DNA"/>
</dbReference>
<dbReference type="EMBL" id="CP002688">
    <property type="protein sequence ID" value="AED97327.1"/>
    <property type="molecule type" value="Genomic_DNA"/>
</dbReference>
<dbReference type="EMBL" id="CP002688">
    <property type="protein sequence ID" value="AED97328.1"/>
    <property type="molecule type" value="Genomic_DNA"/>
</dbReference>
<dbReference type="EMBL" id="CP002688">
    <property type="protein sequence ID" value="ANM70389.1"/>
    <property type="molecule type" value="Genomic_DNA"/>
</dbReference>
<dbReference type="EMBL" id="AY139752">
    <property type="protein sequence ID" value="AAM98074.1"/>
    <property type="molecule type" value="mRNA"/>
</dbReference>
<dbReference type="EMBL" id="BT004542">
    <property type="protein sequence ID" value="AAO42788.1"/>
    <property type="molecule type" value="mRNA"/>
</dbReference>
<dbReference type="EMBL" id="AK175813">
    <property type="protein sequence ID" value="BAD43576.1"/>
    <property type="molecule type" value="mRNA"/>
</dbReference>
<dbReference type="EMBL" id="AK221190">
    <property type="protein sequence ID" value="BAD95283.1"/>
    <property type="molecule type" value="mRNA"/>
</dbReference>
<dbReference type="EMBL" id="AK220973">
    <property type="protein sequence ID" value="BAD94544.1"/>
    <property type="molecule type" value="mRNA"/>
</dbReference>
<dbReference type="EMBL" id="AK221249">
    <property type="protein sequence ID" value="BAD93882.1"/>
    <property type="molecule type" value="mRNA"/>
</dbReference>
<dbReference type="EMBL" id="AK221292">
    <property type="protein sequence ID" value="BAD94016.1"/>
    <property type="molecule type" value="mRNA"/>
</dbReference>
<dbReference type="EMBL" id="AK220890">
    <property type="protein sequence ID" value="BAD94301.1"/>
    <property type="molecule type" value="mRNA"/>
</dbReference>
<dbReference type="EMBL" id="AK176104">
    <property type="protein sequence ID" value="BAD43867.1"/>
    <property type="molecule type" value="mRNA"/>
</dbReference>
<dbReference type="EMBL" id="AK316983">
    <property type="protein sequence ID" value="BAH19679.1"/>
    <property type="molecule type" value="mRNA"/>
</dbReference>
<dbReference type="RefSeq" id="NP_001032108.1">
    <molecule id="Q680Q4-2"/>
    <property type="nucleotide sequence ID" value="NM_001037031.1"/>
</dbReference>
<dbReference type="RefSeq" id="NP_001032109.2">
    <molecule id="Q680Q4-1"/>
    <property type="nucleotide sequence ID" value="NM_001037032.2"/>
</dbReference>
<dbReference type="RefSeq" id="NP_001119465.1">
    <molecule id="Q680Q4-4"/>
    <property type="nucleotide sequence ID" value="NM_001125993.1"/>
</dbReference>
<dbReference type="RefSeq" id="NP_001332003.1">
    <molecule id="Q680Q4-3"/>
    <property type="nucleotide sequence ID" value="NM_001345415.1"/>
</dbReference>
<dbReference type="RefSeq" id="NP_200849.2">
    <molecule id="Q680Q4-3"/>
    <property type="nucleotide sequence ID" value="NM_125434.4"/>
</dbReference>
<dbReference type="RefSeq" id="NP_974969.1">
    <molecule id="Q680Q4-4"/>
    <property type="nucleotide sequence ID" value="NM_203240.3"/>
</dbReference>
<dbReference type="PDB" id="1WEW">
    <property type="method" value="NMR"/>
    <property type="chains" value="A=104-168"/>
</dbReference>
<dbReference type="PDBsum" id="1WEW"/>
<dbReference type="SMR" id="Q680Q4"/>
<dbReference type="BioGRID" id="21407">
    <property type="interactions" value="18"/>
</dbReference>
<dbReference type="FunCoup" id="Q680Q4">
    <property type="interactions" value="2587"/>
</dbReference>
<dbReference type="STRING" id="3702.Q680Q4"/>
<dbReference type="iPTMnet" id="Q680Q4"/>
<dbReference type="PaxDb" id="3702-AT5G60410.2"/>
<dbReference type="ProteomicsDB" id="232620">
    <molecule id="Q680Q4-1"/>
</dbReference>
<dbReference type="EnsemblPlants" id="AT5G60410.1">
    <molecule id="Q680Q4-3"/>
    <property type="protein sequence ID" value="AT5G60410.1"/>
    <property type="gene ID" value="AT5G60410"/>
</dbReference>
<dbReference type="EnsemblPlants" id="AT5G60410.2">
    <molecule id="Q680Q4-4"/>
    <property type="protein sequence ID" value="AT5G60410.2"/>
    <property type="gene ID" value="AT5G60410"/>
</dbReference>
<dbReference type="EnsemblPlants" id="AT5G60410.3">
    <molecule id="Q680Q4-2"/>
    <property type="protein sequence ID" value="AT5G60410.3"/>
    <property type="gene ID" value="AT5G60410"/>
</dbReference>
<dbReference type="EnsemblPlants" id="AT5G60410.4">
    <molecule id="Q680Q4-1"/>
    <property type="protein sequence ID" value="AT5G60410.4"/>
    <property type="gene ID" value="AT5G60410"/>
</dbReference>
<dbReference type="EnsemblPlants" id="AT5G60410.5">
    <molecule id="Q680Q4-4"/>
    <property type="protein sequence ID" value="AT5G60410.5"/>
    <property type="gene ID" value="AT5G60410"/>
</dbReference>
<dbReference type="EnsemblPlants" id="AT5G60410.6">
    <molecule id="Q680Q4-3"/>
    <property type="protein sequence ID" value="AT5G60410.6"/>
    <property type="gene ID" value="AT5G60410"/>
</dbReference>
<dbReference type="GeneID" id="836163"/>
<dbReference type="Gramene" id="AT5G60410.1">
    <molecule id="Q680Q4-3"/>
    <property type="protein sequence ID" value="AT5G60410.1"/>
    <property type="gene ID" value="AT5G60410"/>
</dbReference>
<dbReference type="Gramene" id="AT5G60410.2">
    <molecule id="Q680Q4-4"/>
    <property type="protein sequence ID" value="AT5G60410.2"/>
    <property type="gene ID" value="AT5G60410"/>
</dbReference>
<dbReference type="Gramene" id="AT5G60410.3">
    <molecule id="Q680Q4-2"/>
    <property type="protein sequence ID" value="AT5G60410.3"/>
    <property type="gene ID" value="AT5G60410"/>
</dbReference>
<dbReference type="Gramene" id="AT5G60410.4">
    <molecule id="Q680Q4-1"/>
    <property type="protein sequence ID" value="AT5G60410.4"/>
    <property type="gene ID" value="AT5G60410"/>
</dbReference>
<dbReference type="Gramene" id="AT5G60410.5">
    <molecule id="Q680Q4-4"/>
    <property type="protein sequence ID" value="AT5G60410.5"/>
    <property type="gene ID" value="AT5G60410"/>
</dbReference>
<dbReference type="Gramene" id="AT5G60410.6">
    <molecule id="Q680Q4-3"/>
    <property type="protein sequence ID" value="AT5G60410.6"/>
    <property type="gene ID" value="AT5G60410"/>
</dbReference>
<dbReference type="KEGG" id="ath:AT5G60410"/>
<dbReference type="Araport" id="AT5G60410"/>
<dbReference type="TAIR" id="AT5G60410">
    <property type="gene designation" value="SIZ1"/>
</dbReference>
<dbReference type="eggNOG" id="KOG2169">
    <property type="taxonomic scope" value="Eukaryota"/>
</dbReference>
<dbReference type="InParanoid" id="Q680Q4"/>
<dbReference type="OMA" id="PHGSINC"/>
<dbReference type="OrthoDB" id="28127at2759"/>
<dbReference type="PhylomeDB" id="Q680Q4"/>
<dbReference type="UniPathway" id="UPA00886"/>
<dbReference type="EvolutionaryTrace" id="Q680Q4"/>
<dbReference type="PRO" id="PR:Q680Q4"/>
<dbReference type="Proteomes" id="UP000006548">
    <property type="component" value="Chromosome 5"/>
</dbReference>
<dbReference type="ExpressionAtlas" id="Q680Q4">
    <property type="expression patterns" value="baseline and differential"/>
</dbReference>
<dbReference type="GO" id="GO:0016607">
    <property type="term" value="C:nuclear speck"/>
    <property type="evidence" value="ECO:0007669"/>
    <property type="project" value="UniProtKB-SubCell"/>
</dbReference>
<dbReference type="GO" id="GO:0005634">
    <property type="term" value="C:nucleus"/>
    <property type="evidence" value="ECO:0000314"/>
    <property type="project" value="TAIR"/>
</dbReference>
<dbReference type="GO" id="GO:0032183">
    <property type="term" value="F:SUMO binding"/>
    <property type="evidence" value="ECO:0000353"/>
    <property type="project" value="TAIR"/>
</dbReference>
<dbReference type="GO" id="GO:0019789">
    <property type="term" value="F:SUMO transferase activity"/>
    <property type="evidence" value="ECO:0000314"/>
    <property type="project" value="UniProtKB"/>
</dbReference>
<dbReference type="GO" id="GO:0008270">
    <property type="term" value="F:zinc ion binding"/>
    <property type="evidence" value="ECO:0007669"/>
    <property type="project" value="UniProtKB-KW"/>
</dbReference>
<dbReference type="GO" id="GO:0051301">
    <property type="term" value="P:cell division"/>
    <property type="evidence" value="ECO:0000315"/>
    <property type="project" value="TAIR"/>
</dbReference>
<dbReference type="GO" id="GO:0016036">
    <property type="term" value="P:cellular response to phosphate starvation"/>
    <property type="evidence" value="ECO:0000315"/>
    <property type="project" value="TAIR"/>
</dbReference>
<dbReference type="GO" id="GO:0006952">
    <property type="term" value="P:defense response"/>
    <property type="evidence" value="ECO:0007669"/>
    <property type="project" value="UniProtKB-KW"/>
</dbReference>
<dbReference type="GO" id="GO:0010247">
    <property type="term" value="P:detection of phosphate ion"/>
    <property type="evidence" value="ECO:0000314"/>
    <property type="project" value="TAIR"/>
</dbReference>
<dbReference type="GO" id="GO:0048589">
    <property type="term" value="P:developmental growth"/>
    <property type="evidence" value="ECO:0000315"/>
    <property type="project" value="UniProtKB"/>
</dbReference>
<dbReference type="GO" id="GO:0009553">
    <property type="term" value="P:embryo sac development"/>
    <property type="evidence" value="ECO:0000315"/>
    <property type="project" value="TAIR"/>
</dbReference>
<dbReference type="GO" id="GO:0010286">
    <property type="term" value="P:heat acclimation"/>
    <property type="evidence" value="ECO:0000315"/>
    <property type="project" value="UniProtKB"/>
</dbReference>
<dbReference type="GO" id="GO:0002758">
    <property type="term" value="P:innate immune response-activating signaling pathway"/>
    <property type="evidence" value="ECO:0000315"/>
    <property type="project" value="TAIR"/>
</dbReference>
<dbReference type="GO" id="GO:0009910">
    <property type="term" value="P:negative regulation of flower development"/>
    <property type="evidence" value="ECO:0000315"/>
    <property type="project" value="TAIR"/>
</dbReference>
<dbReference type="GO" id="GO:0010113">
    <property type="term" value="P:negative regulation of systemic acquired resistance"/>
    <property type="evidence" value="ECO:0000315"/>
    <property type="project" value="UniProtKB"/>
</dbReference>
<dbReference type="GO" id="GO:0048481">
    <property type="term" value="P:plant ovule development"/>
    <property type="evidence" value="ECO:0000315"/>
    <property type="project" value="TAIR"/>
</dbReference>
<dbReference type="GO" id="GO:0010183">
    <property type="term" value="P:pollen tube guidance"/>
    <property type="evidence" value="ECO:0000315"/>
    <property type="project" value="TAIR"/>
</dbReference>
<dbReference type="GO" id="GO:0016925">
    <property type="term" value="P:protein sumoylation"/>
    <property type="evidence" value="ECO:0000314"/>
    <property type="project" value="UniProtKB"/>
</dbReference>
<dbReference type="GO" id="GO:0009787">
    <property type="term" value="P:regulation of abscisic acid-activated signaling pathway"/>
    <property type="evidence" value="ECO:0000315"/>
    <property type="project" value="TAIR"/>
</dbReference>
<dbReference type="GO" id="GO:0040008">
    <property type="term" value="P:regulation of growth"/>
    <property type="evidence" value="ECO:0000315"/>
    <property type="project" value="TAIR"/>
</dbReference>
<dbReference type="GO" id="GO:0090352">
    <property type="term" value="P:regulation of nitrate assimilation"/>
    <property type="evidence" value="ECO:0000315"/>
    <property type="project" value="TAIR"/>
</dbReference>
<dbReference type="GO" id="GO:2000070">
    <property type="term" value="P:regulation of response to water deprivation"/>
    <property type="evidence" value="ECO:0000315"/>
    <property type="project" value="TAIR"/>
</dbReference>
<dbReference type="GO" id="GO:0010337">
    <property type="term" value="P:regulation of salicylic acid metabolic process"/>
    <property type="evidence" value="ECO:0000315"/>
    <property type="project" value="TAIR"/>
</dbReference>
<dbReference type="GO" id="GO:0050826">
    <property type="term" value="P:response to freezing"/>
    <property type="evidence" value="ECO:0000315"/>
    <property type="project" value="TAIR"/>
</dbReference>
<dbReference type="GO" id="GO:0009414">
    <property type="term" value="P:response to water deprivation"/>
    <property type="evidence" value="ECO:0000315"/>
    <property type="project" value="UniProtKB"/>
</dbReference>
<dbReference type="GO" id="GO:0062210">
    <property type="term" value="P:shoot regeneration"/>
    <property type="evidence" value="ECO:0000315"/>
    <property type="project" value="TAIR"/>
</dbReference>
<dbReference type="GO" id="GO:0009826">
    <property type="term" value="P:unidimensional cell growth"/>
    <property type="evidence" value="ECO:0000315"/>
    <property type="project" value="TAIR"/>
</dbReference>
<dbReference type="CDD" id="cd15570">
    <property type="entry name" value="PHD_Bye1p_SIZ1_like"/>
    <property type="match status" value="1"/>
</dbReference>
<dbReference type="CDD" id="cd16792">
    <property type="entry name" value="SP-RING_Siz-like"/>
    <property type="match status" value="1"/>
</dbReference>
<dbReference type="FunFam" id="1.10.720.30:FF:000014">
    <property type="entry name" value="E3 SUMO-protein ligase SIZ1"/>
    <property type="match status" value="1"/>
</dbReference>
<dbReference type="FunFam" id="3.30.40.10:FF:000241">
    <property type="entry name" value="E3 SUMO-protein ligase SIZ2"/>
    <property type="match status" value="1"/>
</dbReference>
<dbReference type="Gene3D" id="1.10.720.30">
    <property type="entry name" value="SAP domain"/>
    <property type="match status" value="1"/>
</dbReference>
<dbReference type="Gene3D" id="3.30.40.10">
    <property type="entry name" value="Zinc/RING finger domain, C3HC4 (zinc finger)"/>
    <property type="match status" value="2"/>
</dbReference>
<dbReference type="InterPro" id="IPR003034">
    <property type="entry name" value="SAP_dom"/>
</dbReference>
<dbReference type="InterPro" id="IPR036361">
    <property type="entry name" value="SAP_dom_sf"/>
</dbReference>
<dbReference type="InterPro" id="IPR031141">
    <property type="entry name" value="SIZ1/2_SP-RING"/>
</dbReference>
<dbReference type="InterPro" id="IPR019786">
    <property type="entry name" value="Zinc_finger_PHD-type_CS"/>
</dbReference>
<dbReference type="InterPro" id="IPR011011">
    <property type="entry name" value="Znf_FYVE_PHD"/>
</dbReference>
<dbReference type="InterPro" id="IPR004181">
    <property type="entry name" value="Znf_MIZ"/>
</dbReference>
<dbReference type="InterPro" id="IPR001965">
    <property type="entry name" value="Znf_PHD"/>
</dbReference>
<dbReference type="InterPro" id="IPR013083">
    <property type="entry name" value="Znf_RING/FYVE/PHD"/>
</dbReference>
<dbReference type="PANTHER" id="PTHR10782:SF102">
    <property type="entry name" value="E3 SUMO-PROTEIN LIGASE SIZ1"/>
    <property type="match status" value="1"/>
</dbReference>
<dbReference type="PANTHER" id="PTHR10782">
    <property type="entry name" value="ZINC FINGER MIZ DOMAIN-CONTAINING PROTEIN"/>
    <property type="match status" value="1"/>
</dbReference>
<dbReference type="Pfam" id="PF02037">
    <property type="entry name" value="SAP"/>
    <property type="match status" value="1"/>
</dbReference>
<dbReference type="Pfam" id="PF02891">
    <property type="entry name" value="zf-MIZ"/>
    <property type="match status" value="1"/>
</dbReference>
<dbReference type="SMART" id="SM00249">
    <property type="entry name" value="PHD"/>
    <property type="match status" value="1"/>
</dbReference>
<dbReference type="SMART" id="SM00513">
    <property type="entry name" value="SAP"/>
    <property type="match status" value="1"/>
</dbReference>
<dbReference type="SUPFAM" id="SSF57903">
    <property type="entry name" value="FYVE/PHD zinc finger"/>
    <property type="match status" value="1"/>
</dbReference>
<dbReference type="SUPFAM" id="SSF68906">
    <property type="entry name" value="SAP domain"/>
    <property type="match status" value="1"/>
</dbReference>
<dbReference type="PROSITE" id="PS50800">
    <property type="entry name" value="SAP"/>
    <property type="match status" value="1"/>
</dbReference>
<dbReference type="PROSITE" id="PS01359">
    <property type="entry name" value="ZF_PHD_1"/>
    <property type="match status" value="1"/>
</dbReference>
<dbReference type="PROSITE" id="PS51044">
    <property type="entry name" value="ZF_SP_RING"/>
    <property type="match status" value="1"/>
</dbReference>
<reference key="1">
    <citation type="submission" date="2004-07" db="EMBL/GenBank/DDBJ databases">
        <title>Arabidopsis thaliana SUMO E3 ligase.</title>
        <authorList>
            <person name="Ouyang J."/>
            <person name="Chua N.-H."/>
        </authorList>
    </citation>
    <scope>NUCLEOTIDE SEQUENCE [MRNA] (ISOFORM 3)</scope>
</reference>
<reference key="2">
    <citation type="journal article" date="1998" name="DNA Res.">
        <title>Structural analysis of Arabidopsis thaliana chromosome 5. V. Sequence features of the regions of 1,381,565 bp covered by twenty one physically assigned P1 and TAC clones.</title>
        <authorList>
            <person name="Kaneko T."/>
            <person name="Kotani H."/>
            <person name="Nakamura Y."/>
            <person name="Sato S."/>
            <person name="Asamizu E."/>
            <person name="Miyajima N."/>
            <person name="Tabata S."/>
        </authorList>
    </citation>
    <scope>NUCLEOTIDE SEQUENCE [LARGE SCALE GENOMIC DNA]</scope>
    <source>
        <strain>cv. Columbia</strain>
    </source>
</reference>
<reference key="3">
    <citation type="journal article" date="2017" name="Plant J.">
        <title>Araport11: a complete reannotation of the Arabidopsis thaliana reference genome.</title>
        <authorList>
            <person name="Cheng C.Y."/>
            <person name="Krishnakumar V."/>
            <person name="Chan A.P."/>
            <person name="Thibaud-Nissen F."/>
            <person name="Schobel S."/>
            <person name="Town C.D."/>
        </authorList>
    </citation>
    <scope>GENOME REANNOTATION</scope>
    <source>
        <strain>cv. Columbia</strain>
    </source>
</reference>
<reference key="4">
    <citation type="journal article" date="2003" name="Science">
        <title>Empirical analysis of transcriptional activity in the Arabidopsis genome.</title>
        <authorList>
            <person name="Yamada K."/>
            <person name="Lim J."/>
            <person name="Dale J.M."/>
            <person name="Chen H."/>
            <person name="Shinn P."/>
            <person name="Palm C.J."/>
            <person name="Southwick A.M."/>
            <person name="Wu H.C."/>
            <person name="Kim C.J."/>
            <person name="Nguyen M."/>
            <person name="Pham P.K."/>
            <person name="Cheuk R.F."/>
            <person name="Karlin-Newmann G."/>
            <person name="Liu S.X."/>
            <person name="Lam B."/>
            <person name="Sakano H."/>
            <person name="Wu T."/>
            <person name="Yu G."/>
            <person name="Miranda M."/>
            <person name="Quach H.L."/>
            <person name="Tripp M."/>
            <person name="Chang C.H."/>
            <person name="Lee J.M."/>
            <person name="Toriumi M.J."/>
            <person name="Chan M.M."/>
            <person name="Tang C.C."/>
            <person name="Onodera C.S."/>
            <person name="Deng J.M."/>
            <person name="Akiyama K."/>
            <person name="Ansari Y."/>
            <person name="Arakawa T."/>
            <person name="Banh J."/>
            <person name="Banno F."/>
            <person name="Bowser L."/>
            <person name="Brooks S.Y."/>
            <person name="Carninci P."/>
            <person name="Chao Q."/>
            <person name="Choy N."/>
            <person name="Enju A."/>
            <person name="Goldsmith A.D."/>
            <person name="Gurjal M."/>
            <person name="Hansen N.F."/>
            <person name="Hayashizaki Y."/>
            <person name="Johnson-Hopson C."/>
            <person name="Hsuan V.W."/>
            <person name="Iida K."/>
            <person name="Karnes M."/>
            <person name="Khan S."/>
            <person name="Koesema E."/>
            <person name="Ishida J."/>
            <person name="Jiang P.X."/>
            <person name="Jones T."/>
            <person name="Kawai J."/>
            <person name="Kamiya A."/>
            <person name="Meyers C."/>
            <person name="Nakajima M."/>
            <person name="Narusaka M."/>
            <person name="Seki M."/>
            <person name="Sakurai T."/>
            <person name="Satou M."/>
            <person name="Tamse R."/>
            <person name="Vaysberg M."/>
            <person name="Wallender E.K."/>
            <person name="Wong C."/>
            <person name="Yamamura Y."/>
            <person name="Yuan S."/>
            <person name="Shinozaki K."/>
            <person name="Davis R.W."/>
            <person name="Theologis A."/>
            <person name="Ecker J.R."/>
        </authorList>
    </citation>
    <scope>NUCLEOTIDE SEQUENCE [LARGE SCALE MRNA] (ISOFORM 3)</scope>
    <source>
        <strain>cv. Columbia</strain>
    </source>
</reference>
<reference key="5">
    <citation type="submission" date="2005-03" db="EMBL/GenBank/DDBJ databases">
        <title>Large-scale analysis of RIKEN Arabidopsis full-length (RAFL) cDNAs.</title>
        <authorList>
            <person name="Totoki Y."/>
            <person name="Seki M."/>
            <person name="Ishida J."/>
            <person name="Nakajima M."/>
            <person name="Enju A."/>
            <person name="Kamiya A."/>
            <person name="Narusaka M."/>
            <person name="Shin-i T."/>
            <person name="Nakagawa M."/>
            <person name="Sakamoto N."/>
            <person name="Oishi K."/>
            <person name="Kohara Y."/>
            <person name="Kobayashi M."/>
            <person name="Toyoda A."/>
            <person name="Sakaki Y."/>
            <person name="Sakurai T."/>
            <person name="Iida K."/>
            <person name="Akiyama K."/>
            <person name="Satou M."/>
            <person name="Toyoda T."/>
            <person name="Konagaya A."/>
            <person name="Carninci P."/>
            <person name="Kawai J."/>
            <person name="Hayashizaki Y."/>
            <person name="Shinozaki K."/>
        </authorList>
    </citation>
    <scope>NUCLEOTIDE SEQUENCE [LARGE SCALE MRNA] (ISOFORMS 1; 2; 3 AND 4)</scope>
    <source>
        <strain>cv. Columbia</strain>
    </source>
</reference>
<reference key="6">
    <citation type="journal article" date="2009" name="DNA Res.">
        <title>Analysis of multiple occurrences of alternative splicing events in Arabidopsis thaliana using novel sequenced full-length cDNAs.</title>
        <authorList>
            <person name="Iida K."/>
            <person name="Fukami-Kobayashi K."/>
            <person name="Toyoda A."/>
            <person name="Sakaki Y."/>
            <person name="Kobayashi M."/>
            <person name="Seki M."/>
            <person name="Shinozaki K."/>
        </authorList>
    </citation>
    <scope>NUCLEOTIDE SEQUENCE [LARGE SCALE MRNA] (ISOFORM 2)</scope>
    <source>
        <strain>cv. Columbia</strain>
    </source>
</reference>
<reference key="7">
    <citation type="journal article" date="2005" name="Proc. Natl. Acad. Sci. U.S.A.">
        <title>The Arabidopsis SUMO E3 ligase SIZ1 controls phosphate deficiency responses.</title>
        <authorList>
            <person name="Miura K."/>
            <person name="Rus A."/>
            <person name="Sharkhuu A."/>
            <person name="Yokoi S."/>
            <person name="Karthikeyan A.S."/>
            <person name="Raghothama K.G."/>
            <person name="Baek D."/>
            <person name="Koo Y.D."/>
            <person name="Jin J.B."/>
            <person name="Bressan R.A."/>
            <person name="Yun D.-J."/>
            <person name="Hasegawa P.M."/>
        </authorList>
    </citation>
    <scope>IDENTIFICATION</scope>
    <scope>FUNCTION</scope>
    <scope>SUBCELLULAR LOCATION</scope>
    <scope>DISRUPTION PHENOTYPE</scope>
</reference>
<reference key="8">
    <citation type="submission" date="2004-11" db="PDB data bank">
        <title>Solution structure of PHD domain in DNA-binding family protein AAM98074.</title>
        <authorList>
            <consortium name="RIKEN structural genomics initiative (RSGI)"/>
        </authorList>
    </citation>
    <scope>STRUCTURE BY NMR OF 104-168</scope>
</reference>
<reference key="9">
    <citation type="journal article" date="2006" name="Plant Physiol.">
        <title>SIZ1 small ubiquitin-like modifier E3 ligase facilitates basal thermotolerance in Arabidopsis independent of salicylic acid.</title>
        <authorList>
            <person name="Yoo C.Y."/>
            <person name="Miura K."/>
            <person name="Jin J.B."/>
            <person name="Lee J."/>
            <person name="Park H.C."/>
            <person name="Salt D.E."/>
            <person name="Yun D.J."/>
            <person name="Bressan R.A."/>
            <person name="Hasegawa P.M."/>
        </authorList>
    </citation>
    <scope>FUNCTION</scope>
    <scope>DISRUPTION PHENOTYPE</scope>
</reference>
<reference key="10">
    <citation type="journal article" date="2007" name="Plant Cell">
        <title>SIZ1-mediated sumoylation of ICE1 controls CBF3/DREB1A expression and freezing tolerance in Arabidopsis.</title>
        <authorList>
            <person name="Miura K."/>
            <person name="Jin J.B."/>
            <person name="Lee J."/>
            <person name="Yoo C.Y."/>
            <person name="Stirm V."/>
            <person name="Miura T."/>
            <person name="Ashworth E.N."/>
            <person name="Bressan R.A."/>
            <person name="Yun D.J."/>
            <person name="Hasegawa P.M."/>
        </authorList>
    </citation>
    <scope>FUNCTION</scope>
</reference>
<reference key="11">
    <citation type="journal article" date="2007" name="Plant Cell">
        <title>The Arabidopsis E3 SUMO ligase SIZ1 regulates plant growth and drought responses.</title>
        <authorList>
            <person name="Catala R."/>
            <person name="Ouyang J."/>
            <person name="Abreu I.A."/>
            <person name="Hu Y."/>
            <person name="Seo H."/>
            <person name="Zhang X."/>
            <person name="Chua N.H."/>
        </authorList>
    </citation>
    <scope>FUNCTION</scope>
    <scope>TISSUE SPECIFICITY</scope>
    <scope>DISRUPTION PHENOTYPE</scope>
</reference>
<reference key="12">
    <citation type="journal article" date="2007" name="Plant J.">
        <title>Salicylic acid-mediated innate immunity in Arabidopsis is regulated by SIZ1 SUMO E3 ligase.</title>
        <authorList>
            <person name="Lee J."/>
            <person name="Nam J."/>
            <person name="Park H.C."/>
            <person name="Na G."/>
            <person name="Miura K."/>
            <person name="Jin J.B."/>
            <person name="Yoo C.Y."/>
            <person name="Baek D."/>
            <person name="Kim D.H."/>
            <person name="Jeong J.C."/>
            <person name="Kim D."/>
            <person name="Lee S.Y."/>
            <person name="Salt D.E."/>
            <person name="Mengiste T."/>
            <person name="Gong Q."/>
            <person name="Ma S."/>
            <person name="Bohnert H.J."/>
            <person name="Kwak S.S."/>
            <person name="Bressan R.A."/>
            <person name="Hasegawa P.M."/>
            <person name="Yun D.J."/>
        </authorList>
    </citation>
    <scope>FUNCTION</scope>
    <scope>DISRUPTION PHENOTYPE</scope>
</reference>
<reference key="13">
    <citation type="journal article" date="2007" name="Plant Physiol.">
        <title>Genetic analysis of SUMOylation in Arabidopsis: conjugation of SUMO1 and SUMO2 to nuclear proteins is essential.</title>
        <authorList>
            <person name="Saracco S.A."/>
            <person name="Miller M.J."/>
            <person name="Kurepa J."/>
            <person name="Vierstra R.D."/>
        </authorList>
    </citation>
    <scope>FUNCTION</scope>
    <scope>DISRUPTION PHENOTYPE</scope>
</reference>
<reference key="14">
    <citation type="journal article" date="2008" name="J. Biol. Chem.">
        <title>The PHD domain of plant PIAS proteins mediates sumoylation of bromodomain GTE proteins.</title>
        <authorList>
            <person name="Garcia-Dominguez M."/>
            <person name="March-Diaz R."/>
            <person name="Reyes J.C."/>
        </authorList>
    </citation>
    <scope>FUNCTION</scope>
    <scope>AUTOSUMOYLATION AT LYS-100 AND LYS-488</scope>
    <scope>INTERACTION WITH SCE1; GTE3 AND GTE5</scope>
    <scope>DOMAIN</scope>
    <scope>MUTAGENESIS OF LYS-100 AND LYS-488</scope>
</reference>
<reference key="15">
    <citation type="journal article" date="2008" name="Plant J.">
        <title>The SUMO E3 ligase, AtSIZ1, regulates flowering by controlling a salicylic acid-mediated floral promotion pathway and through affects on FLC chromatin structure.</title>
        <authorList>
            <person name="Jin J.B."/>
            <person name="Jin Y.H."/>
            <person name="Lee J."/>
            <person name="Miura K."/>
            <person name="Yoo C.Y."/>
            <person name="Kim W.Y."/>
            <person name="Van Oosten M."/>
            <person name="Hyun Y."/>
            <person name="Somers D.E."/>
            <person name="Lee I."/>
            <person name="Yun D.J."/>
            <person name="Bressan R.A."/>
            <person name="Hasegawa P.M."/>
        </authorList>
    </citation>
    <scope>FUNCTION</scope>
    <scope>DISRUPTION PHENOTYPE</scope>
</reference>
<reference key="16">
    <citation type="journal article" date="2009" name="Proc. Natl. Acad. Sci. U.S.A.">
        <title>Sumoylation of ABI5 by the Arabidopsis SUMO E3 ligase SIZ1 negatively regulates abscisic acid signaling.</title>
        <authorList>
            <person name="Miura K."/>
            <person name="Lee J."/>
            <person name="Jin J.B."/>
            <person name="Yoo C.Y."/>
            <person name="Miura T."/>
            <person name="Hasegawa P.M."/>
        </authorList>
    </citation>
    <scope>FUNCTION</scope>
    <scope>DISRUPTION PHENOTYPE</scope>
</reference>
<reference key="17">
    <citation type="journal article" date="2016" name="Plant J.">
        <title>SUMOylation represses SnRK1 signaling in Arabidopsis.</title>
        <authorList>
            <person name="Crozet P."/>
            <person name="Margalha L."/>
            <person name="Butowt R."/>
            <person name="Fernandes N."/>
            <person name="Elias C.A."/>
            <person name="Orosa B."/>
            <person name="Tomanov K."/>
            <person name="Teige M."/>
            <person name="Bachmair A."/>
            <person name="Sadanandom A."/>
            <person name="Baena-Gonzalez E."/>
        </authorList>
    </citation>
    <scope>FUNCTION</scope>
    <scope>MUTAGENESIS OF CYS-379</scope>
</reference>
<comment type="function">
    <text evidence="4 5 6 7 8 9 10 11 12 13">E3 SUMO protein ligase involved in regulation processes. Mediates SUMO/ attachment to PHR1, a MYB transcriptional activator controlling the phosphate deficiency responses (PubMed:15894620). Functions as an upstream negative regulator of salicylic acid (SA) accumulation and subsequent SA-mediated systemic acquired resistance (SAR) signaling. Probably not involved in jasmonic acid (JA)-mediated defense response. Participates in abiotic stress-induced sumoylation. Controls heat shock-induced SUMO1 and SUMO2 conjugation and facilitates basal thermotolerance. Involved in freezing tolerance by mediating sumoylation of ICE1, a transcription activator of the cold signaling regulator CBF3/DREB1A. Acts as a positive regulator of drought stress tolerance. Acts as a floral repressor that promotes FLC expression by repressing FLD activity through sumoylation. Acts as a negative regulator of abscisic acid (ABA) signaling through ABI5 sumoylation. Mediates sumoylation of SCE1, GTE3 and GTE5. Functions as a negative regulator of SnRK1 signaling through sumoylation of several components of the SnRK1 complex (PubMed:26662259).</text>
</comment>
<comment type="pathway">
    <text>Protein modification; protein sumoylation.</text>
</comment>
<comment type="subunit">
    <text evidence="11">Interacts (via PHD domain) with SCE1, GTE3 and GTE5.</text>
</comment>
<comment type="subcellular location">
    <subcellularLocation>
        <location evidence="4">Nucleus speckle</location>
    </subcellularLocation>
</comment>
<comment type="alternative products">
    <event type="alternative splicing"/>
    <isoform>
        <id>Q680Q4-1</id>
        <name>1</name>
        <sequence type="displayed"/>
    </isoform>
    <isoform>
        <id>Q680Q4-2</id>
        <name>2</name>
        <sequence type="described" ref="VSP_015483 VSP_015484"/>
    </isoform>
    <isoform>
        <id>Q680Q4-3</id>
        <name>3</name>
        <sequence type="described" ref="VSP_015486 VSP_015487"/>
    </isoform>
    <isoform>
        <id>Q680Q4-4</id>
        <name>4</name>
        <sequence type="described" ref="VSP_015485"/>
    </isoform>
</comment>
<comment type="tissue specificity">
    <text evidence="9">Ubiquitous.</text>
</comment>
<comment type="domain">
    <text evidence="11">The PHD-type zinc finger mediates interaction with SCE1, GTE3 and GTE5 and is required for E3 activity.</text>
</comment>
<comment type="PTM">
    <text>Autosumoylated at Lys-100 and Lys-488.</text>
</comment>
<comment type="disruption phenotype">
    <text evidence="4 5 6 8 9 10 12">Dwarf phenotype. Heat-sensitive phenotype. Early flowering under short day. Elevated level of salicylic acid (SA), increased expression of pathogenesis-related (PR) genes and increased resistance to the bacterial pathogen P.syringae. ABA hypersensitivity during seed germination primary root growth. Exaggerated prototypical Pi-starvation responses, including increased root-shoot mass ratio and greater anthocyanin accumulation (PubMed:15894620).</text>
</comment>
<comment type="similarity">
    <text evidence="19">Belongs to the PIAS family.</text>
</comment>
<gene>
    <name evidence="15" type="primary">SIZ1</name>
    <name evidence="20" type="ordered locus">At5g60410</name>
    <name evidence="21" type="ORF">MUF9.5</name>
    <name type="ORF">MUF9.70</name>
</gene>
<evidence type="ECO:0000255" key="1">
    <source>
        <dbReference type="PROSITE-ProRule" id="PRU00186"/>
    </source>
</evidence>
<evidence type="ECO:0000255" key="2">
    <source>
        <dbReference type="PROSITE-ProRule" id="PRU00452"/>
    </source>
</evidence>
<evidence type="ECO:0000256" key="3">
    <source>
        <dbReference type="SAM" id="MobiDB-lite"/>
    </source>
</evidence>
<evidence type="ECO:0000269" key="4">
    <source>
    </source>
</evidence>
<evidence type="ECO:0000269" key="5">
    <source>
    </source>
</evidence>
<evidence type="ECO:0000269" key="6">
    <source>
    </source>
</evidence>
<evidence type="ECO:0000269" key="7">
    <source>
    </source>
</evidence>
<evidence type="ECO:0000269" key="8">
    <source>
    </source>
</evidence>
<evidence type="ECO:0000269" key="9">
    <source>
    </source>
</evidence>
<evidence type="ECO:0000269" key="10">
    <source>
    </source>
</evidence>
<evidence type="ECO:0000269" key="11">
    <source>
    </source>
</evidence>
<evidence type="ECO:0000269" key="12">
    <source>
    </source>
</evidence>
<evidence type="ECO:0000269" key="13">
    <source>
    </source>
</evidence>
<evidence type="ECO:0000303" key="14">
    <source>
    </source>
</evidence>
<evidence type="ECO:0000303" key="15">
    <source>
    </source>
</evidence>
<evidence type="ECO:0000303" key="16">
    <source>
    </source>
</evidence>
<evidence type="ECO:0000303" key="17">
    <source ref="1"/>
</evidence>
<evidence type="ECO:0000303" key="18">
    <source ref="5"/>
</evidence>
<evidence type="ECO:0000305" key="19"/>
<evidence type="ECO:0000312" key="20">
    <source>
        <dbReference type="Araport" id="AT5G60410"/>
    </source>
</evidence>
<evidence type="ECO:0000312" key="21">
    <source>
        <dbReference type="EMBL" id="BAB08225.1"/>
    </source>
</evidence>
<evidence type="ECO:0007829" key="22">
    <source>
        <dbReference type="PDB" id="1WEW"/>
    </source>
</evidence>
<keyword id="KW-0002">3D-structure</keyword>
<keyword id="KW-0025">Alternative splicing</keyword>
<keyword id="KW-0287">Flowering</keyword>
<keyword id="KW-1017">Isopeptide bond</keyword>
<keyword id="KW-0479">Metal-binding</keyword>
<keyword id="KW-0539">Nucleus</keyword>
<keyword id="KW-0611">Plant defense</keyword>
<keyword id="KW-1185">Reference proteome</keyword>
<keyword id="KW-0346">Stress response</keyword>
<keyword id="KW-0808">Transferase</keyword>
<keyword id="KW-0832">Ubl conjugation</keyword>
<keyword id="KW-0833">Ubl conjugation pathway</keyword>
<keyword id="KW-0862">Zinc</keyword>
<keyword id="KW-0863">Zinc-finger</keyword>
<sequence length="884" mass="97034">MDLEANCKEKLSYFRIKELKDVLTQLGLSKQGKKQELVDRILTLLSDEQAARLLSKKNTVAKEAVAKLVDDTYRKMQVSGASDLASKGQVSSDTSNLKVKGEPEDPFQPEIKVRCVCGNSLETDSMIQCEDPRCHVWQHVGCVILPDKPMDGNPPLPESFYCEICRLTRADPFWVTVAHPLSPVRLTATTIPNDGASTMQSVERTFQITRADKDLLAKPEYDVQAWCMLLNDKVLFRMQWPQYADLQVNGVPVRAINRPGGQLLGVNGRDDGPIITSCIRDGVNRISLSGGDVRIFCFGVRLVKRRTLQQVLNLIPEEGKGETFEDALARVRRCIGGGGGDDNADSDSDIEVVADFFGVNLRCPMSGSRIKVAGRFLPCVHMGCFDLDVFVELNQRSRKWQCPICLKNYSVEHVIVDPYFNRITSKMKHCDEEVTEIEVKPDGSWRVKFKRESERRELGELSQWHAPDGSLCPSAVDIKRKMEMLPVKQEGYSDGPAPLKLGIRKNRNGIWEVSKPNTNGLSSSNRQEKVGYQEKNIIPMSSSATGSGRDGDDASVNQDAIGTFDFVANGMELDSISMNVDSGYNFPDRNQSGEGGNNEVIVLSDSDDENDLVITPGPAYSGCQTDGGLTFPLNPPGIINSYNEDPHSIAGGSSGLGLFNDDDEFDTPLWSFPSETPEAPGFQLFRSDADVSGGLVGLHHHSPLNCSPEINGGYTMAPETSMASVPVVPGSTGRSEANDGLVDNPLAFGRDDPSLQIFLPTKPDASAQSGFKNQADMSNGLRSEDWISLRLGDSASGNHGDPATTNGINSSHQMSTREGSMDTTTETASLLLGMNDSRQDKAKKQRSDNPFSFPRQKRSNNEQDHQTRHRSLNKICIILCAGKN</sequence>
<feature type="chain" id="PRO_0000218984" description="E3 SUMO-protein ligase SIZ1">
    <location>
        <begin position="1"/>
        <end position="884"/>
    </location>
</feature>
<feature type="domain" description="SAP" evidence="1">
    <location>
        <begin position="11"/>
        <end position="45"/>
    </location>
</feature>
<feature type="zinc finger region" description="PHD-type">
    <location>
        <begin position="112"/>
        <end position="168"/>
    </location>
</feature>
<feature type="zinc finger region" description="SP-RING-type" evidence="2">
    <location>
        <begin position="346"/>
        <end position="429"/>
    </location>
</feature>
<feature type="region of interest" description="Disordered" evidence="3">
    <location>
        <begin position="84"/>
        <end position="103"/>
    </location>
</feature>
<feature type="region of interest" description="Disordered" evidence="3">
    <location>
        <begin position="753"/>
        <end position="778"/>
    </location>
</feature>
<feature type="region of interest" description="Disordered" evidence="3">
    <location>
        <begin position="792"/>
        <end position="824"/>
    </location>
</feature>
<feature type="region of interest" description="Disordered" evidence="3">
    <location>
        <begin position="836"/>
        <end position="869"/>
    </location>
</feature>
<feature type="compositionally biased region" description="Polar residues" evidence="3">
    <location>
        <begin position="88"/>
        <end position="97"/>
    </location>
</feature>
<feature type="compositionally biased region" description="Polar residues" evidence="3">
    <location>
        <begin position="766"/>
        <end position="778"/>
    </location>
</feature>
<feature type="compositionally biased region" description="Polar residues" evidence="3">
    <location>
        <begin position="803"/>
        <end position="824"/>
    </location>
</feature>
<feature type="compositionally biased region" description="Basic and acidic residues" evidence="3">
    <location>
        <begin position="837"/>
        <end position="847"/>
    </location>
</feature>
<feature type="binding site" evidence="2">
    <location>
        <position position="379"/>
    </location>
    <ligand>
        <name>Zn(2+)</name>
        <dbReference type="ChEBI" id="CHEBI:29105"/>
    </ligand>
</feature>
<feature type="binding site" evidence="2">
    <location>
        <position position="381"/>
    </location>
    <ligand>
        <name>Zn(2+)</name>
        <dbReference type="ChEBI" id="CHEBI:29105"/>
    </ligand>
</feature>
<feature type="binding site" evidence="2">
    <location>
        <position position="402"/>
    </location>
    <ligand>
        <name>Zn(2+)</name>
        <dbReference type="ChEBI" id="CHEBI:29105"/>
    </ligand>
</feature>
<feature type="binding site" evidence="2">
    <location>
        <position position="405"/>
    </location>
    <ligand>
        <name>Zn(2+)</name>
        <dbReference type="ChEBI" id="CHEBI:29105"/>
    </ligand>
</feature>
<feature type="cross-link" description="Glycyl lysine isopeptide (Lys-Gly) (interchain with G-Cter in SUMO)">
    <location>
        <position position="100"/>
    </location>
</feature>
<feature type="cross-link" description="Glycyl lysine isopeptide (Lys-Gly) (interchain with G-Cter in SUMO)">
    <location>
        <position position="488"/>
    </location>
</feature>
<feature type="splice variant" id="VSP_015483" description="In isoform 2." evidence="16 18">
    <original>ASLLL</original>
    <variation>GLFPV</variation>
    <location>
        <begin position="828"/>
        <end position="832"/>
    </location>
</feature>
<feature type="splice variant" id="VSP_015484" description="In isoform 2." evidence="16 18">
    <location>
        <begin position="833"/>
        <end position="884"/>
    </location>
</feature>
<feature type="splice variant" id="VSP_015485" description="In isoform 4." evidence="18">
    <original>NNEQDHQTRHRSLNKICIILCAGKN</original>
    <variation>VRPRMYLSIDSDSETMNRIIRQDTGV</variation>
    <location>
        <begin position="860"/>
        <end position="884"/>
    </location>
</feature>
<feature type="splice variant" id="VSP_015486" description="In isoform 3." evidence="14 17 18">
    <original>NNEQDHQTRHRSLN</original>
    <variation>VRPRMYLSIDSDSE</variation>
    <location>
        <begin position="860"/>
        <end position="873"/>
    </location>
</feature>
<feature type="splice variant" id="VSP_015487" description="In isoform 3." evidence="14 17 18">
    <location>
        <begin position="874"/>
        <end position="884"/>
    </location>
</feature>
<feature type="mutagenesis site" description="Strongly reduces autosumoylation; when associated with R-488." evidence="11">
    <original>K</original>
    <variation>R</variation>
    <location>
        <position position="100"/>
    </location>
</feature>
<feature type="mutagenesis site" description="Abolishes activity." evidence="13">
    <original>C</original>
    <variation>A</variation>
    <location>
        <position position="379"/>
    </location>
</feature>
<feature type="mutagenesis site" description="Strongly reduces autosumoylation; when associated with R-100." evidence="11">
    <original>K</original>
    <variation>R</variation>
    <location>
        <position position="488"/>
    </location>
</feature>
<feature type="sequence conflict" description="In Ref. 5; BAD94301/BAD43867." evidence="19" ref="5">
    <original>I</original>
    <variation>S</variation>
    <location>
        <position position="335"/>
    </location>
</feature>
<feature type="sequence conflict" description="In Ref. 5; BAD43867." evidence="19" ref="5">
    <original>E</original>
    <variation>D</variation>
    <location>
        <position position="436"/>
    </location>
</feature>
<feature type="sequence conflict" description="In Ref. 5; BAD43867." evidence="19" ref="5">
    <original>D</original>
    <variation>G</variation>
    <location>
        <position position="785"/>
    </location>
</feature>
<feature type="strand" evidence="22">
    <location>
        <begin position="106"/>
        <end position="108"/>
    </location>
</feature>
<feature type="strand" evidence="22">
    <location>
        <begin position="126"/>
        <end position="128"/>
    </location>
</feature>
<feature type="turn" evidence="22">
    <location>
        <begin position="132"/>
        <end position="134"/>
    </location>
</feature>
<feature type="strand" evidence="22">
    <location>
        <begin position="137"/>
        <end position="139"/>
    </location>
</feature>
<feature type="helix" evidence="22">
    <location>
        <begin position="140"/>
        <end position="143"/>
    </location>
</feature>
<feature type="turn" evidence="22">
    <location>
        <begin position="148"/>
        <end position="150"/>
    </location>
</feature>
<feature type="helix" evidence="22">
    <location>
        <begin position="163"/>
        <end position="167"/>
    </location>
</feature>
<name>SIZ1_ARATH</name>
<protein>
    <recommendedName>
        <fullName evidence="15">E3 SUMO-protein ligase SIZ1</fullName>
        <ecNumber evidence="19">2.3.2.-</ecNumber>
    </recommendedName>
    <alternativeName>
        <fullName evidence="19">E3 SUMO-protein transferase SIZ1</fullName>
    </alternativeName>
</protein>
<proteinExistence type="evidence at protein level"/>